<protein>
    <recommendedName>
        <fullName evidence="1">Aspartyl/glutamyl-tRNA(Asn/Gln) amidotransferase subunit B</fullName>
        <shortName evidence="1">Asp/Glu-ADT subunit B</shortName>
        <ecNumber evidence="1">6.3.5.-</ecNumber>
    </recommendedName>
</protein>
<evidence type="ECO:0000255" key="1">
    <source>
        <dbReference type="HAMAP-Rule" id="MF_00121"/>
    </source>
</evidence>
<dbReference type="EC" id="6.3.5.-" evidence="1"/>
<dbReference type="EMBL" id="CP001283">
    <property type="protein sequence ID" value="ACK89825.1"/>
    <property type="molecule type" value="Genomic_DNA"/>
</dbReference>
<dbReference type="RefSeq" id="WP_001047678.1">
    <property type="nucleotide sequence ID" value="NC_011773.1"/>
</dbReference>
<dbReference type="SMR" id="B7JMB3"/>
<dbReference type="GeneID" id="45020378"/>
<dbReference type="KEGG" id="bcu:BCAH820_0354"/>
<dbReference type="HOGENOM" id="CLU_019240_0_0_9"/>
<dbReference type="Proteomes" id="UP000001363">
    <property type="component" value="Chromosome"/>
</dbReference>
<dbReference type="GO" id="GO:0050566">
    <property type="term" value="F:asparaginyl-tRNA synthase (glutamine-hydrolyzing) activity"/>
    <property type="evidence" value="ECO:0007669"/>
    <property type="project" value="RHEA"/>
</dbReference>
<dbReference type="GO" id="GO:0005524">
    <property type="term" value="F:ATP binding"/>
    <property type="evidence" value="ECO:0007669"/>
    <property type="project" value="UniProtKB-KW"/>
</dbReference>
<dbReference type="GO" id="GO:0050567">
    <property type="term" value="F:glutaminyl-tRNA synthase (glutamine-hydrolyzing) activity"/>
    <property type="evidence" value="ECO:0007669"/>
    <property type="project" value="UniProtKB-UniRule"/>
</dbReference>
<dbReference type="GO" id="GO:0070681">
    <property type="term" value="P:glutaminyl-tRNAGln biosynthesis via transamidation"/>
    <property type="evidence" value="ECO:0007669"/>
    <property type="project" value="TreeGrafter"/>
</dbReference>
<dbReference type="GO" id="GO:0006412">
    <property type="term" value="P:translation"/>
    <property type="evidence" value="ECO:0007669"/>
    <property type="project" value="UniProtKB-UniRule"/>
</dbReference>
<dbReference type="FunFam" id="1.10.10.410:FF:000001">
    <property type="entry name" value="Aspartyl/glutamyl-tRNA(Asn/Gln) amidotransferase subunit B"/>
    <property type="match status" value="1"/>
</dbReference>
<dbReference type="FunFam" id="1.10.150.380:FF:000001">
    <property type="entry name" value="Aspartyl/glutamyl-tRNA(Asn/Gln) amidotransferase subunit B"/>
    <property type="match status" value="1"/>
</dbReference>
<dbReference type="Gene3D" id="1.10.10.410">
    <property type="match status" value="1"/>
</dbReference>
<dbReference type="Gene3D" id="1.10.150.380">
    <property type="entry name" value="GatB domain, N-terminal subdomain"/>
    <property type="match status" value="1"/>
</dbReference>
<dbReference type="HAMAP" id="MF_00121">
    <property type="entry name" value="GatB"/>
    <property type="match status" value="1"/>
</dbReference>
<dbReference type="InterPro" id="IPR017959">
    <property type="entry name" value="Asn/Gln-tRNA_amidoTrfase_suB/E"/>
</dbReference>
<dbReference type="InterPro" id="IPR006075">
    <property type="entry name" value="Asn/Gln-tRNA_Trfase_suB/E_cat"/>
</dbReference>
<dbReference type="InterPro" id="IPR018027">
    <property type="entry name" value="Asn/Gln_amidotransferase"/>
</dbReference>
<dbReference type="InterPro" id="IPR003789">
    <property type="entry name" value="Asn/Gln_tRNA_amidoTrase-B-like"/>
</dbReference>
<dbReference type="InterPro" id="IPR004413">
    <property type="entry name" value="GatB"/>
</dbReference>
<dbReference type="InterPro" id="IPR042114">
    <property type="entry name" value="GatB_C_1"/>
</dbReference>
<dbReference type="InterPro" id="IPR023168">
    <property type="entry name" value="GatB_Yqey_C_2"/>
</dbReference>
<dbReference type="InterPro" id="IPR017958">
    <property type="entry name" value="Gln-tRNA_amidoTrfase_suB_CS"/>
</dbReference>
<dbReference type="InterPro" id="IPR014746">
    <property type="entry name" value="Gln_synth/guanido_kin_cat_dom"/>
</dbReference>
<dbReference type="NCBIfam" id="TIGR00133">
    <property type="entry name" value="gatB"/>
    <property type="match status" value="1"/>
</dbReference>
<dbReference type="NCBIfam" id="NF004011">
    <property type="entry name" value="PRK05477.1-1"/>
    <property type="match status" value="1"/>
</dbReference>
<dbReference type="NCBIfam" id="NF004012">
    <property type="entry name" value="PRK05477.1-2"/>
    <property type="match status" value="1"/>
</dbReference>
<dbReference type="NCBIfam" id="NF004014">
    <property type="entry name" value="PRK05477.1-4"/>
    <property type="match status" value="1"/>
</dbReference>
<dbReference type="PANTHER" id="PTHR11659">
    <property type="entry name" value="GLUTAMYL-TRNA GLN AMIDOTRANSFERASE SUBUNIT B MITOCHONDRIAL AND PROKARYOTIC PET112-RELATED"/>
    <property type="match status" value="1"/>
</dbReference>
<dbReference type="PANTHER" id="PTHR11659:SF0">
    <property type="entry name" value="GLUTAMYL-TRNA(GLN) AMIDOTRANSFERASE SUBUNIT B, MITOCHONDRIAL"/>
    <property type="match status" value="1"/>
</dbReference>
<dbReference type="Pfam" id="PF02934">
    <property type="entry name" value="GatB_N"/>
    <property type="match status" value="1"/>
</dbReference>
<dbReference type="Pfam" id="PF02637">
    <property type="entry name" value="GatB_Yqey"/>
    <property type="match status" value="1"/>
</dbReference>
<dbReference type="SMART" id="SM00845">
    <property type="entry name" value="GatB_Yqey"/>
    <property type="match status" value="1"/>
</dbReference>
<dbReference type="SUPFAM" id="SSF89095">
    <property type="entry name" value="GatB/YqeY motif"/>
    <property type="match status" value="1"/>
</dbReference>
<dbReference type="SUPFAM" id="SSF55931">
    <property type="entry name" value="Glutamine synthetase/guanido kinase"/>
    <property type="match status" value="1"/>
</dbReference>
<dbReference type="PROSITE" id="PS01234">
    <property type="entry name" value="GATB"/>
    <property type="match status" value="1"/>
</dbReference>
<feature type="chain" id="PRO_1000190067" description="Aspartyl/glutamyl-tRNA(Asn/Gln) amidotransferase subunit B">
    <location>
        <begin position="1"/>
        <end position="475"/>
    </location>
</feature>
<keyword id="KW-0067">ATP-binding</keyword>
<keyword id="KW-0436">Ligase</keyword>
<keyword id="KW-0547">Nucleotide-binding</keyword>
<keyword id="KW-0648">Protein biosynthesis</keyword>
<reference key="1">
    <citation type="submission" date="2008-10" db="EMBL/GenBank/DDBJ databases">
        <title>Genome sequence of Bacillus cereus AH820.</title>
        <authorList>
            <person name="Dodson R.J."/>
            <person name="Durkin A.S."/>
            <person name="Rosovitz M.J."/>
            <person name="Rasko D.A."/>
            <person name="Hoffmaster A."/>
            <person name="Ravel J."/>
            <person name="Sutton G."/>
        </authorList>
    </citation>
    <scope>NUCLEOTIDE SEQUENCE [LARGE SCALE GENOMIC DNA]</scope>
    <source>
        <strain>AH820</strain>
    </source>
</reference>
<proteinExistence type="inferred from homology"/>
<accession>B7JMB3</accession>
<gene>
    <name evidence="1" type="primary">gatB</name>
    <name type="ordered locus">BCAH820_0354</name>
</gene>
<comment type="function">
    <text evidence="1">Allows the formation of correctly charged Asn-tRNA(Asn) or Gln-tRNA(Gln) through the transamidation of misacylated Asp-tRNA(Asn) or Glu-tRNA(Gln) in organisms which lack either or both of asparaginyl-tRNA or glutaminyl-tRNA synthetases. The reaction takes place in the presence of glutamine and ATP through an activated phospho-Asp-tRNA(Asn) or phospho-Glu-tRNA(Gln).</text>
</comment>
<comment type="catalytic activity">
    <reaction evidence="1">
        <text>L-glutamyl-tRNA(Gln) + L-glutamine + ATP + H2O = L-glutaminyl-tRNA(Gln) + L-glutamate + ADP + phosphate + H(+)</text>
        <dbReference type="Rhea" id="RHEA:17521"/>
        <dbReference type="Rhea" id="RHEA-COMP:9681"/>
        <dbReference type="Rhea" id="RHEA-COMP:9684"/>
        <dbReference type="ChEBI" id="CHEBI:15377"/>
        <dbReference type="ChEBI" id="CHEBI:15378"/>
        <dbReference type="ChEBI" id="CHEBI:29985"/>
        <dbReference type="ChEBI" id="CHEBI:30616"/>
        <dbReference type="ChEBI" id="CHEBI:43474"/>
        <dbReference type="ChEBI" id="CHEBI:58359"/>
        <dbReference type="ChEBI" id="CHEBI:78520"/>
        <dbReference type="ChEBI" id="CHEBI:78521"/>
        <dbReference type="ChEBI" id="CHEBI:456216"/>
    </reaction>
</comment>
<comment type="catalytic activity">
    <reaction evidence="1">
        <text>L-aspartyl-tRNA(Asn) + L-glutamine + ATP + H2O = L-asparaginyl-tRNA(Asn) + L-glutamate + ADP + phosphate + 2 H(+)</text>
        <dbReference type="Rhea" id="RHEA:14513"/>
        <dbReference type="Rhea" id="RHEA-COMP:9674"/>
        <dbReference type="Rhea" id="RHEA-COMP:9677"/>
        <dbReference type="ChEBI" id="CHEBI:15377"/>
        <dbReference type="ChEBI" id="CHEBI:15378"/>
        <dbReference type="ChEBI" id="CHEBI:29985"/>
        <dbReference type="ChEBI" id="CHEBI:30616"/>
        <dbReference type="ChEBI" id="CHEBI:43474"/>
        <dbReference type="ChEBI" id="CHEBI:58359"/>
        <dbReference type="ChEBI" id="CHEBI:78515"/>
        <dbReference type="ChEBI" id="CHEBI:78516"/>
        <dbReference type="ChEBI" id="CHEBI:456216"/>
    </reaction>
</comment>
<comment type="subunit">
    <text evidence="1">Heterotrimer of A, B and C subunits.</text>
</comment>
<comment type="similarity">
    <text evidence="1">Belongs to the GatB/GatE family. GatB subfamily.</text>
</comment>
<name>GATB_BACC0</name>
<organism>
    <name type="scientific">Bacillus cereus (strain AH820)</name>
    <dbReference type="NCBI Taxonomy" id="405535"/>
    <lineage>
        <taxon>Bacteria</taxon>
        <taxon>Bacillati</taxon>
        <taxon>Bacillota</taxon>
        <taxon>Bacilli</taxon>
        <taxon>Bacillales</taxon>
        <taxon>Bacillaceae</taxon>
        <taxon>Bacillus</taxon>
        <taxon>Bacillus cereus group</taxon>
    </lineage>
</organism>
<sequence>MNLETIIGLEVHVELKTNSKIFSASPTEFGAEPNTQTSVIDLGYPGVLPTLNKEAVNFAMKAAMALNCEIATETKFDRKNYFYPDNPKAYQISQFDKPIGENGWIEIEVDGKKKRIGITRLHLEEDAGKSTHTADGSLVDYNRQGMPLIEIVSEPDMRTPEEAYAYLEKLKSIIQYTGVSDCKMEEGSLRCDANISLRPVGQEKFGTKAELKNLNSFTYVQKGLEHEQVRQEKELLSGGIIQQETRRYDEATKKTILMRVKEGSDDYRYFPEPDLVELYIDDAWKEEVRASIPELPDARKARYVAEIGLPAYDAHVLTLTKEMSDFFEAAIADGADAKLTSNWLMGEVLAYLNKQQKELKDVALTPAGLSKMVQLIEKGTISSKIAKKVFNELIEKGGDPEEIVKAKGLVQISDEGTLRKVVTEILDNNEQSIEDFKNGKDRAIGFLVGQIMKATKGQANPPLVNKILLEEINKR</sequence>